<accession>B7MCM5</accession>
<organism>
    <name type="scientific">Escherichia coli O45:K1 (strain S88 / ExPEC)</name>
    <dbReference type="NCBI Taxonomy" id="585035"/>
    <lineage>
        <taxon>Bacteria</taxon>
        <taxon>Pseudomonadati</taxon>
        <taxon>Pseudomonadota</taxon>
        <taxon>Gammaproteobacteria</taxon>
        <taxon>Enterobacterales</taxon>
        <taxon>Enterobacteriaceae</taxon>
        <taxon>Escherichia</taxon>
    </lineage>
</organism>
<reference key="1">
    <citation type="journal article" date="2009" name="PLoS Genet.">
        <title>Organised genome dynamics in the Escherichia coli species results in highly diverse adaptive paths.</title>
        <authorList>
            <person name="Touchon M."/>
            <person name="Hoede C."/>
            <person name="Tenaillon O."/>
            <person name="Barbe V."/>
            <person name="Baeriswyl S."/>
            <person name="Bidet P."/>
            <person name="Bingen E."/>
            <person name="Bonacorsi S."/>
            <person name="Bouchier C."/>
            <person name="Bouvet O."/>
            <person name="Calteau A."/>
            <person name="Chiapello H."/>
            <person name="Clermont O."/>
            <person name="Cruveiller S."/>
            <person name="Danchin A."/>
            <person name="Diard M."/>
            <person name="Dossat C."/>
            <person name="Karoui M.E."/>
            <person name="Frapy E."/>
            <person name="Garry L."/>
            <person name="Ghigo J.M."/>
            <person name="Gilles A.M."/>
            <person name="Johnson J."/>
            <person name="Le Bouguenec C."/>
            <person name="Lescat M."/>
            <person name="Mangenot S."/>
            <person name="Martinez-Jehanne V."/>
            <person name="Matic I."/>
            <person name="Nassif X."/>
            <person name="Oztas S."/>
            <person name="Petit M.A."/>
            <person name="Pichon C."/>
            <person name="Rouy Z."/>
            <person name="Ruf C.S."/>
            <person name="Schneider D."/>
            <person name="Tourret J."/>
            <person name="Vacherie B."/>
            <person name="Vallenet D."/>
            <person name="Medigue C."/>
            <person name="Rocha E.P.C."/>
            <person name="Denamur E."/>
        </authorList>
    </citation>
    <scope>NUCLEOTIDE SEQUENCE [LARGE SCALE GENOMIC DNA]</scope>
    <source>
        <strain>S88 / ExPEC</strain>
    </source>
</reference>
<evidence type="ECO:0000255" key="1">
    <source>
        <dbReference type="HAMAP-Rule" id="MF_01207"/>
    </source>
</evidence>
<gene>
    <name evidence="1" type="primary">msrQ</name>
    <name type="ordered locus">ECS88_2024</name>
</gene>
<protein>
    <recommendedName>
        <fullName evidence="1">Protein-methionine-sulfoxide reductase heme-binding subunit MsrQ</fullName>
    </recommendedName>
    <alternativeName>
        <fullName evidence="1">Flavocytochrome MsrQ</fullName>
    </alternativeName>
</protein>
<name>MSRQ_ECO45</name>
<proteinExistence type="inferred from homology"/>
<sequence length="211" mass="23983">MRLTAKQVTWLKVCLHLAGLLPFLWLAWAINHGGLGADPVKDIQHFTGRTALKFLLATLLITPLARYAKQPLLIRTRRLLGLWCFAWATLHLTSYALLELGVNNLALLGKELITRPYLTLGIISWVILLALAFTSTQAMQRKLGKHWQQLHNFVYLVAILAPIHYLWSVKIISPQPLIYAGLAVLLLALRYKKLLSLFNQLRKQVHNKLSL</sequence>
<keyword id="KW-0997">Cell inner membrane</keyword>
<keyword id="KW-1003">Cell membrane</keyword>
<keyword id="KW-0249">Electron transport</keyword>
<keyword id="KW-0285">Flavoprotein</keyword>
<keyword id="KW-0288">FMN</keyword>
<keyword id="KW-0349">Heme</keyword>
<keyword id="KW-0408">Iron</keyword>
<keyword id="KW-0472">Membrane</keyword>
<keyword id="KW-0479">Metal-binding</keyword>
<keyword id="KW-1185">Reference proteome</keyword>
<keyword id="KW-0812">Transmembrane</keyword>
<keyword id="KW-1133">Transmembrane helix</keyword>
<keyword id="KW-0813">Transport</keyword>
<dbReference type="EMBL" id="CU928161">
    <property type="protein sequence ID" value="CAR03322.1"/>
    <property type="molecule type" value="Genomic_DNA"/>
</dbReference>
<dbReference type="RefSeq" id="WP_001240073.1">
    <property type="nucleotide sequence ID" value="NC_011742.1"/>
</dbReference>
<dbReference type="SMR" id="B7MCM5"/>
<dbReference type="KEGG" id="ecz:ECS88_2024"/>
<dbReference type="HOGENOM" id="CLU_080662_0_1_6"/>
<dbReference type="Proteomes" id="UP000000747">
    <property type="component" value="Chromosome"/>
</dbReference>
<dbReference type="GO" id="GO:0005886">
    <property type="term" value="C:plasma membrane"/>
    <property type="evidence" value="ECO:0007669"/>
    <property type="project" value="UniProtKB-SubCell"/>
</dbReference>
<dbReference type="GO" id="GO:0009055">
    <property type="term" value="F:electron transfer activity"/>
    <property type="evidence" value="ECO:0007669"/>
    <property type="project" value="UniProtKB-UniRule"/>
</dbReference>
<dbReference type="GO" id="GO:0010181">
    <property type="term" value="F:FMN binding"/>
    <property type="evidence" value="ECO:0007669"/>
    <property type="project" value="UniProtKB-UniRule"/>
</dbReference>
<dbReference type="GO" id="GO:0020037">
    <property type="term" value="F:heme binding"/>
    <property type="evidence" value="ECO:0007669"/>
    <property type="project" value="UniProtKB-UniRule"/>
</dbReference>
<dbReference type="GO" id="GO:0046872">
    <property type="term" value="F:metal ion binding"/>
    <property type="evidence" value="ECO:0007669"/>
    <property type="project" value="UniProtKB-KW"/>
</dbReference>
<dbReference type="GO" id="GO:0016679">
    <property type="term" value="F:oxidoreductase activity, acting on diphenols and related substances as donors"/>
    <property type="evidence" value="ECO:0007669"/>
    <property type="project" value="TreeGrafter"/>
</dbReference>
<dbReference type="GO" id="GO:0030091">
    <property type="term" value="P:protein repair"/>
    <property type="evidence" value="ECO:0007669"/>
    <property type="project" value="UniProtKB-UniRule"/>
</dbReference>
<dbReference type="HAMAP" id="MF_01207">
    <property type="entry name" value="MsrQ"/>
    <property type="match status" value="1"/>
</dbReference>
<dbReference type="InterPro" id="IPR013130">
    <property type="entry name" value="Fe3_Rdtase_TM_dom"/>
</dbReference>
<dbReference type="InterPro" id="IPR022837">
    <property type="entry name" value="MsrQ-like"/>
</dbReference>
<dbReference type="NCBIfam" id="NF003830">
    <property type="entry name" value="PRK05419.1-1"/>
    <property type="match status" value="1"/>
</dbReference>
<dbReference type="NCBIfam" id="NF003831">
    <property type="entry name" value="PRK05419.1-2"/>
    <property type="match status" value="1"/>
</dbReference>
<dbReference type="NCBIfam" id="NF003832">
    <property type="entry name" value="PRK05419.1-4"/>
    <property type="match status" value="1"/>
</dbReference>
<dbReference type="PANTHER" id="PTHR36964">
    <property type="entry name" value="PROTEIN-METHIONINE-SULFOXIDE REDUCTASE HEME-BINDING SUBUNIT MSRQ"/>
    <property type="match status" value="1"/>
</dbReference>
<dbReference type="PANTHER" id="PTHR36964:SF1">
    <property type="entry name" value="PROTEIN-METHIONINE-SULFOXIDE REDUCTASE HEME-BINDING SUBUNIT MSRQ"/>
    <property type="match status" value="1"/>
</dbReference>
<dbReference type="Pfam" id="PF01794">
    <property type="entry name" value="Ferric_reduct"/>
    <property type="match status" value="1"/>
</dbReference>
<comment type="function">
    <text evidence="1">Part of the MsrPQ system that repairs oxidized periplasmic proteins containing methionine sulfoxide residues (Met-O), using respiratory chain electrons. Thus protects these proteins from oxidative-stress damage caused by reactive species of oxygen and chlorine generated by the host defense mechanisms. MsrPQ is essential for the maintenance of envelope integrity under bleach stress, rescuing a wide series of structurally unrelated periplasmic proteins from methionine oxidation, including the primary periplasmic chaperone SurA and the lipoprotein Pal. MsrQ provides electrons for reduction to the reductase catalytic subunit MsrP, using the quinone pool of the respiratory chain.</text>
</comment>
<comment type="cofactor">
    <cofactor evidence="1">
        <name>FMN</name>
        <dbReference type="ChEBI" id="CHEBI:58210"/>
    </cofactor>
    <text evidence="1">Binds 1 FMN per subunit.</text>
</comment>
<comment type="cofactor">
    <cofactor evidence="1">
        <name>heme b</name>
        <dbReference type="ChEBI" id="CHEBI:60344"/>
    </cofactor>
    <text evidence="1">Binds 1 heme b (iron(II)-protoporphyrin IX) group per subunit.</text>
</comment>
<comment type="subunit">
    <text evidence="1">Heterodimer of a catalytic subunit (MsrP) and a heme-binding subunit (MsrQ).</text>
</comment>
<comment type="subcellular location">
    <subcellularLocation>
        <location evidence="1">Cell inner membrane</location>
        <topology evidence="1">Multi-pass membrane protein</topology>
    </subcellularLocation>
</comment>
<comment type="similarity">
    <text evidence="1">Belongs to the MsrQ family.</text>
</comment>
<feature type="chain" id="PRO_1000138728" description="Protein-methionine-sulfoxide reductase heme-binding subunit MsrQ">
    <location>
        <begin position="1"/>
        <end position="211"/>
    </location>
</feature>
<feature type="transmembrane region" description="Helical" evidence="1">
    <location>
        <begin position="10"/>
        <end position="30"/>
    </location>
</feature>
<feature type="transmembrane region" description="Helical" evidence="1">
    <location>
        <begin position="82"/>
        <end position="102"/>
    </location>
</feature>
<feature type="transmembrane region" description="Helical" evidence="1">
    <location>
        <begin position="116"/>
        <end position="136"/>
    </location>
</feature>
<feature type="transmembrane region" description="Helical" evidence="1">
    <location>
        <begin position="153"/>
        <end position="173"/>
    </location>
</feature>
<feature type="transmembrane region" description="Helical" evidence="1">
    <location>
        <begin position="178"/>
        <end position="198"/>
    </location>
</feature>